<accession>Q131B9</accession>
<feature type="chain" id="PRO_1000063495" description="Histidinol-phosphate aminotransferase">
    <location>
        <begin position="1"/>
        <end position="365"/>
    </location>
</feature>
<feature type="region of interest" description="Disordered" evidence="2">
    <location>
        <begin position="1"/>
        <end position="22"/>
    </location>
</feature>
<feature type="modified residue" description="N6-(pyridoxal phosphate)lysine" evidence="1">
    <location>
        <position position="221"/>
    </location>
</feature>
<reference key="1">
    <citation type="submission" date="2006-03" db="EMBL/GenBank/DDBJ databases">
        <title>Complete sequence of Rhodopseudomonas palustris BisB5.</title>
        <authorList>
            <consortium name="US DOE Joint Genome Institute"/>
            <person name="Copeland A."/>
            <person name="Lucas S."/>
            <person name="Lapidus A."/>
            <person name="Barry K."/>
            <person name="Detter J.C."/>
            <person name="Glavina del Rio T."/>
            <person name="Hammon N."/>
            <person name="Israni S."/>
            <person name="Dalin E."/>
            <person name="Tice H."/>
            <person name="Pitluck S."/>
            <person name="Chain P."/>
            <person name="Malfatti S."/>
            <person name="Shin M."/>
            <person name="Vergez L."/>
            <person name="Schmutz J."/>
            <person name="Larimer F."/>
            <person name="Land M."/>
            <person name="Hauser L."/>
            <person name="Pelletier D.A."/>
            <person name="Kyrpides N."/>
            <person name="Lykidis A."/>
            <person name="Oda Y."/>
            <person name="Harwood C.S."/>
            <person name="Richardson P."/>
        </authorList>
    </citation>
    <scope>NUCLEOTIDE SEQUENCE [LARGE SCALE GENOMIC DNA]</scope>
    <source>
        <strain>BisB5</strain>
    </source>
</reference>
<keyword id="KW-0028">Amino-acid biosynthesis</keyword>
<keyword id="KW-0032">Aminotransferase</keyword>
<keyword id="KW-0368">Histidine biosynthesis</keyword>
<keyword id="KW-0663">Pyridoxal phosphate</keyword>
<keyword id="KW-0808">Transferase</keyword>
<sequence>MSRPVPNPGILDIAPYTPGKSPVAEPGRKVFKLSANETPFGPSPHAIAAYKSAADHLEDYPEGTSRVLREAIGRAYGLDPDRIICGAGSDEILNLLAHTYLGPDDEAISTTHGFLVYPIATLANGARNVVAEEKDLTCNVDAILAKVSPKTKIVWLANPNNPTGTYIPFDEVKRLRAGLPGHVVLVLDAAYADYVSRNDYEIGIELVATTDNTVMTHTFSKIHGLAALRIGWMFGPANIVDAVNRIRGPFNVSVPAQLAAVAAIQDSAHVEKSRTHTEQWRNRLTEELTKIGLTVTPSVCNFVLMHFPTTKGKTAAEADAFLTKRGLVLRALGNYNLPHALRMTIGTDEANELVIEGLREFMAQP</sequence>
<organism>
    <name type="scientific">Rhodopseudomonas palustris (strain BisB5)</name>
    <dbReference type="NCBI Taxonomy" id="316057"/>
    <lineage>
        <taxon>Bacteria</taxon>
        <taxon>Pseudomonadati</taxon>
        <taxon>Pseudomonadota</taxon>
        <taxon>Alphaproteobacteria</taxon>
        <taxon>Hyphomicrobiales</taxon>
        <taxon>Nitrobacteraceae</taxon>
        <taxon>Rhodopseudomonas</taxon>
    </lineage>
</organism>
<protein>
    <recommendedName>
        <fullName evidence="1">Histidinol-phosphate aminotransferase</fullName>
        <ecNumber evidence="1">2.6.1.9</ecNumber>
    </recommendedName>
    <alternativeName>
        <fullName evidence="1">Imidazole acetol-phosphate transaminase</fullName>
    </alternativeName>
</protein>
<name>HIS8_RHOPS</name>
<dbReference type="EC" id="2.6.1.9" evidence="1"/>
<dbReference type="EMBL" id="CP000283">
    <property type="protein sequence ID" value="ABE41320.1"/>
    <property type="molecule type" value="Genomic_DNA"/>
</dbReference>
<dbReference type="SMR" id="Q131B9"/>
<dbReference type="STRING" id="316057.RPD_4101"/>
<dbReference type="KEGG" id="rpd:RPD_4101"/>
<dbReference type="eggNOG" id="COG0079">
    <property type="taxonomic scope" value="Bacteria"/>
</dbReference>
<dbReference type="HOGENOM" id="CLU_017584_3_3_5"/>
<dbReference type="BioCyc" id="RPAL316057:RPD_RS20635-MONOMER"/>
<dbReference type="UniPathway" id="UPA00031">
    <property type="reaction ID" value="UER00012"/>
</dbReference>
<dbReference type="Proteomes" id="UP000001818">
    <property type="component" value="Chromosome"/>
</dbReference>
<dbReference type="GO" id="GO:0004400">
    <property type="term" value="F:histidinol-phosphate transaminase activity"/>
    <property type="evidence" value="ECO:0007669"/>
    <property type="project" value="UniProtKB-UniRule"/>
</dbReference>
<dbReference type="GO" id="GO:0030170">
    <property type="term" value="F:pyridoxal phosphate binding"/>
    <property type="evidence" value="ECO:0007669"/>
    <property type="project" value="InterPro"/>
</dbReference>
<dbReference type="GO" id="GO:0000105">
    <property type="term" value="P:L-histidine biosynthetic process"/>
    <property type="evidence" value="ECO:0007669"/>
    <property type="project" value="UniProtKB-UniRule"/>
</dbReference>
<dbReference type="CDD" id="cd00609">
    <property type="entry name" value="AAT_like"/>
    <property type="match status" value="1"/>
</dbReference>
<dbReference type="Gene3D" id="3.90.1150.10">
    <property type="entry name" value="Aspartate Aminotransferase, domain 1"/>
    <property type="match status" value="1"/>
</dbReference>
<dbReference type="Gene3D" id="3.40.640.10">
    <property type="entry name" value="Type I PLP-dependent aspartate aminotransferase-like (Major domain)"/>
    <property type="match status" value="1"/>
</dbReference>
<dbReference type="HAMAP" id="MF_01023">
    <property type="entry name" value="HisC_aminotrans_2"/>
    <property type="match status" value="1"/>
</dbReference>
<dbReference type="InterPro" id="IPR004839">
    <property type="entry name" value="Aminotransferase_I/II_large"/>
</dbReference>
<dbReference type="InterPro" id="IPR005861">
    <property type="entry name" value="HisP_aminotrans"/>
</dbReference>
<dbReference type="InterPro" id="IPR050106">
    <property type="entry name" value="HistidinolP_aminotransfase"/>
</dbReference>
<dbReference type="InterPro" id="IPR015424">
    <property type="entry name" value="PyrdxlP-dep_Trfase"/>
</dbReference>
<dbReference type="InterPro" id="IPR015421">
    <property type="entry name" value="PyrdxlP-dep_Trfase_major"/>
</dbReference>
<dbReference type="InterPro" id="IPR015422">
    <property type="entry name" value="PyrdxlP-dep_Trfase_small"/>
</dbReference>
<dbReference type="NCBIfam" id="TIGR01141">
    <property type="entry name" value="hisC"/>
    <property type="match status" value="1"/>
</dbReference>
<dbReference type="PANTHER" id="PTHR43643:SF3">
    <property type="entry name" value="HISTIDINOL-PHOSPHATE AMINOTRANSFERASE"/>
    <property type="match status" value="1"/>
</dbReference>
<dbReference type="PANTHER" id="PTHR43643">
    <property type="entry name" value="HISTIDINOL-PHOSPHATE AMINOTRANSFERASE 2"/>
    <property type="match status" value="1"/>
</dbReference>
<dbReference type="Pfam" id="PF00155">
    <property type="entry name" value="Aminotran_1_2"/>
    <property type="match status" value="1"/>
</dbReference>
<dbReference type="SUPFAM" id="SSF53383">
    <property type="entry name" value="PLP-dependent transferases"/>
    <property type="match status" value="1"/>
</dbReference>
<comment type="catalytic activity">
    <reaction evidence="1">
        <text>L-histidinol phosphate + 2-oxoglutarate = 3-(imidazol-4-yl)-2-oxopropyl phosphate + L-glutamate</text>
        <dbReference type="Rhea" id="RHEA:23744"/>
        <dbReference type="ChEBI" id="CHEBI:16810"/>
        <dbReference type="ChEBI" id="CHEBI:29985"/>
        <dbReference type="ChEBI" id="CHEBI:57766"/>
        <dbReference type="ChEBI" id="CHEBI:57980"/>
        <dbReference type="EC" id="2.6.1.9"/>
    </reaction>
</comment>
<comment type="cofactor">
    <cofactor evidence="1">
        <name>pyridoxal 5'-phosphate</name>
        <dbReference type="ChEBI" id="CHEBI:597326"/>
    </cofactor>
</comment>
<comment type="pathway">
    <text evidence="1">Amino-acid biosynthesis; L-histidine biosynthesis; L-histidine from 5-phospho-alpha-D-ribose 1-diphosphate: step 7/9.</text>
</comment>
<comment type="subunit">
    <text evidence="1">Homodimer.</text>
</comment>
<comment type="similarity">
    <text evidence="1">Belongs to the class-II pyridoxal-phosphate-dependent aminotransferase family. Histidinol-phosphate aminotransferase subfamily.</text>
</comment>
<evidence type="ECO:0000255" key="1">
    <source>
        <dbReference type="HAMAP-Rule" id="MF_01023"/>
    </source>
</evidence>
<evidence type="ECO:0000256" key="2">
    <source>
        <dbReference type="SAM" id="MobiDB-lite"/>
    </source>
</evidence>
<gene>
    <name evidence="1" type="primary">hisC</name>
    <name type="ordered locus">RPD_4101</name>
</gene>
<proteinExistence type="inferred from homology"/>